<comment type="catalytic activity">
    <reaction>
        <text>(2R)-2-phosphoglycerate = phosphoenolpyruvate + H2O</text>
        <dbReference type="Rhea" id="RHEA:10164"/>
        <dbReference type="ChEBI" id="CHEBI:15377"/>
        <dbReference type="ChEBI" id="CHEBI:58289"/>
        <dbReference type="ChEBI" id="CHEBI:58702"/>
        <dbReference type="EC" id="4.2.1.11"/>
    </reaction>
</comment>
<comment type="cofactor">
    <cofactor>
        <name>Mg(2+)</name>
        <dbReference type="ChEBI" id="CHEBI:18420"/>
    </cofactor>
    <text>Mg(2+) is required for catalysis and for stabilizing the dimer.</text>
</comment>
<comment type="pathway">
    <text>Carbohydrate degradation; glycolysis; pyruvate from D-glyceraldehyde 3-phosphate: step 4/5.</text>
</comment>
<comment type="subunit">
    <text evidence="1">Homodimer.</text>
</comment>
<comment type="subcellular location">
    <subcellularLocation>
        <location evidence="2">Cytoplasm</location>
    </subcellularLocation>
</comment>
<comment type="similarity">
    <text evidence="3">Belongs to the enolase family.</text>
</comment>
<feature type="chain" id="PRO_0000134060" description="Enolase">
    <location>
        <begin position="1"/>
        <end position="440"/>
    </location>
</feature>
<feature type="active site" description="Proton donor" evidence="1">
    <location>
        <position position="211"/>
    </location>
</feature>
<feature type="active site" description="Proton acceptor" evidence="1">
    <location>
        <position position="346"/>
    </location>
</feature>
<feature type="binding site" evidence="1">
    <location>
        <position position="159"/>
    </location>
    <ligand>
        <name>substrate</name>
    </ligand>
</feature>
<feature type="binding site" evidence="1">
    <location>
        <position position="168"/>
    </location>
    <ligand>
        <name>substrate</name>
    </ligand>
</feature>
<feature type="binding site" evidence="1">
    <location>
        <position position="245"/>
    </location>
    <ligand>
        <name>Mg(2+)</name>
        <dbReference type="ChEBI" id="CHEBI:18420"/>
    </ligand>
</feature>
<feature type="binding site" evidence="1">
    <location>
        <position position="296"/>
    </location>
    <ligand>
        <name>Mg(2+)</name>
        <dbReference type="ChEBI" id="CHEBI:18420"/>
    </ligand>
</feature>
<feature type="binding site" evidence="1">
    <location>
        <position position="296"/>
    </location>
    <ligand>
        <name>substrate</name>
    </ligand>
</feature>
<feature type="binding site" evidence="1">
    <location>
        <position position="321"/>
    </location>
    <ligand>
        <name>Mg(2+)</name>
        <dbReference type="ChEBI" id="CHEBI:18420"/>
    </ligand>
</feature>
<feature type="binding site" evidence="1">
    <location>
        <position position="321"/>
    </location>
    <ligand>
        <name>substrate</name>
    </ligand>
</feature>
<feature type="binding site" evidence="1">
    <location>
        <begin position="373"/>
        <end position="376"/>
    </location>
    <ligand>
        <name>substrate</name>
    </ligand>
</feature>
<feature type="binding site" evidence="1">
    <location>
        <position position="397"/>
    </location>
    <ligand>
        <name>substrate</name>
    </ligand>
</feature>
<name>ENO_TUBBO</name>
<evidence type="ECO:0000250" key="1"/>
<evidence type="ECO:0000269" key="2">
    <source>
    </source>
</evidence>
<evidence type="ECO:0000305" key="3"/>
<protein>
    <recommendedName>
        <fullName>Enolase</fullName>
        <ecNumber>4.2.1.11</ecNumber>
    </recommendedName>
    <alternativeName>
        <fullName>2-phospho-D-glycerate hydro-lyase</fullName>
    </alternativeName>
    <alternativeName>
        <fullName>2-phosphoglycerate dehydratase</fullName>
    </alternativeName>
</protein>
<accession>Q6W3C0</accession>
<dbReference type="EC" id="4.2.1.11"/>
<dbReference type="EMBL" id="AY314788">
    <property type="protein sequence ID" value="AAQ88397.1"/>
    <property type="molecule type" value="Genomic_DNA"/>
</dbReference>
<dbReference type="SMR" id="Q6W3C0"/>
<dbReference type="UniPathway" id="UPA00109">
    <property type="reaction ID" value="UER00187"/>
</dbReference>
<dbReference type="GO" id="GO:0000015">
    <property type="term" value="C:phosphopyruvate hydratase complex"/>
    <property type="evidence" value="ECO:0007669"/>
    <property type="project" value="InterPro"/>
</dbReference>
<dbReference type="GO" id="GO:0000287">
    <property type="term" value="F:magnesium ion binding"/>
    <property type="evidence" value="ECO:0007669"/>
    <property type="project" value="InterPro"/>
</dbReference>
<dbReference type="GO" id="GO:0004634">
    <property type="term" value="F:phosphopyruvate hydratase activity"/>
    <property type="evidence" value="ECO:0007669"/>
    <property type="project" value="UniProtKB-EC"/>
</dbReference>
<dbReference type="GO" id="GO:0006096">
    <property type="term" value="P:glycolytic process"/>
    <property type="evidence" value="ECO:0007669"/>
    <property type="project" value="UniProtKB-UniPathway"/>
</dbReference>
<dbReference type="CDD" id="cd03313">
    <property type="entry name" value="enolase"/>
    <property type="match status" value="1"/>
</dbReference>
<dbReference type="FunFam" id="3.30.390.10:FF:000001">
    <property type="entry name" value="Enolase"/>
    <property type="match status" value="1"/>
</dbReference>
<dbReference type="FunFam" id="3.20.20.120:FF:000002">
    <property type="entry name" value="Enolase 1"/>
    <property type="match status" value="1"/>
</dbReference>
<dbReference type="Gene3D" id="3.20.20.120">
    <property type="entry name" value="Enolase-like C-terminal domain"/>
    <property type="match status" value="1"/>
</dbReference>
<dbReference type="Gene3D" id="3.30.390.10">
    <property type="entry name" value="Enolase-like, N-terminal domain"/>
    <property type="match status" value="1"/>
</dbReference>
<dbReference type="HAMAP" id="MF_00318">
    <property type="entry name" value="Enolase"/>
    <property type="match status" value="1"/>
</dbReference>
<dbReference type="InterPro" id="IPR018247">
    <property type="entry name" value="EF_Hand_1_Ca_BS"/>
</dbReference>
<dbReference type="InterPro" id="IPR000941">
    <property type="entry name" value="Enolase"/>
</dbReference>
<dbReference type="InterPro" id="IPR036849">
    <property type="entry name" value="Enolase-like_C_sf"/>
</dbReference>
<dbReference type="InterPro" id="IPR029017">
    <property type="entry name" value="Enolase-like_N"/>
</dbReference>
<dbReference type="InterPro" id="IPR020810">
    <property type="entry name" value="Enolase_C"/>
</dbReference>
<dbReference type="InterPro" id="IPR020809">
    <property type="entry name" value="Enolase_CS"/>
</dbReference>
<dbReference type="InterPro" id="IPR020811">
    <property type="entry name" value="Enolase_N"/>
</dbReference>
<dbReference type="NCBIfam" id="TIGR01060">
    <property type="entry name" value="eno"/>
    <property type="match status" value="1"/>
</dbReference>
<dbReference type="PANTHER" id="PTHR11902">
    <property type="entry name" value="ENOLASE"/>
    <property type="match status" value="1"/>
</dbReference>
<dbReference type="PANTHER" id="PTHR11902:SF1">
    <property type="entry name" value="ENOLASE"/>
    <property type="match status" value="1"/>
</dbReference>
<dbReference type="Pfam" id="PF00113">
    <property type="entry name" value="Enolase_C"/>
    <property type="match status" value="1"/>
</dbReference>
<dbReference type="Pfam" id="PF03952">
    <property type="entry name" value="Enolase_N"/>
    <property type="match status" value="1"/>
</dbReference>
<dbReference type="PIRSF" id="PIRSF001400">
    <property type="entry name" value="Enolase"/>
    <property type="match status" value="1"/>
</dbReference>
<dbReference type="PRINTS" id="PR00148">
    <property type="entry name" value="ENOLASE"/>
</dbReference>
<dbReference type="SFLD" id="SFLDS00001">
    <property type="entry name" value="Enolase"/>
    <property type="match status" value="1"/>
</dbReference>
<dbReference type="SFLD" id="SFLDF00002">
    <property type="entry name" value="enolase"/>
    <property type="match status" value="1"/>
</dbReference>
<dbReference type="SMART" id="SM01192">
    <property type="entry name" value="Enolase_C"/>
    <property type="match status" value="1"/>
</dbReference>
<dbReference type="SMART" id="SM01193">
    <property type="entry name" value="Enolase_N"/>
    <property type="match status" value="1"/>
</dbReference>
<dbReference type="SUPFAM" id="SSF51604">
    <property type="entry name" value="Enolase C-terminal domain-like"/>
    <property type="match status" value="1"/>
</dbReference>
<dbReference type="SUPFAM" id="SSF54826">
    <property type="entry name" value="Enolase N-terminal domain-like"/>
    <property type="match status" value="1"/>
</dbReference>
<dbReference type="PROSITE" id="PS00164">
    <property type="entry name" value="ENOLASE"/>
    <property type="match status" value="1"/>
</dbReference>
<reference key="1">
    <citation type="journal article" date="2004" name="Fungal Genet. Biol.">
        <title>Enolase from the ectomycorrhizal fungus Tuber borchii Vittad.: biochemical characterization, molecular cloning, and localization.</title>
        <authorList>
            <person name="Polidori E."/>
            <person name="Saltarelli R."/>
            <person name="Ceccaroli P."/>
            <person name="Buffalini M."/>
            <person name="Pierleoni R."/>
            <person name="Palma F."/>
            <person name="Bonfante P."/>
            <person name="Stocchi V."/>
        </authorList>
    </citation>
    <scope>NUCLEOTIDE SEQUENCE [GENOMIC DNA]</scope>
    <scope>CHARACTERIZATION</scope>
    <scope>SUBCELLULAR LOCATION</scope>
</reference>
<keyword id="KW-0963">Cytoplasm</keyword>
<keyword id="KW-0324">Glycolysis</keyword>
<keyword id="KW-0456">Lyase</keyword>
<keyword id="KW-0460">Magnesium</keyword>
<keyword id="KW-0479">Metal-binding</keyword>
<sequence length="440" mass="47931">MITKIHARSVYDSRGNPTVEVDLTTTDTGLHRAIVPSGASTGQHEAIELRDKDKTKWAGKGVLKAVENVNTIIAPALIKEKFDVKDQATIDKFLIDLDGTPNKAKLGANAILGVSLAVAKAGAAAKKVPLYAHVADLAGTKKPFVLPVPFMNVINGGSHAGGRLAFQEFMIVPSEAPSFTEAMRQGAEVYQILKTLTKKKYGQSAGNVGDEGGWPDIQTVEEALDLITDAIDKAGYTGQIKIAMDVASSEFYKEDAKKYDLDFKNPDSDSSKWLTYQELADLYKSLAQRYPIVSIEDPFAEDDWEAWAHFYKTSDFQIVGDDLTVTNPIRIKRAIDEKSCNALLLKVNQIATLTESIQAAKDSYSAGWGVMVSHRSGETEDVTIADIVVGLRAGQIKTGAPARSERLAKLNQILRIEEELGEQAIYAGTSSEPPHLYIFI</sequence>
<proteinExistence type="evidence at protein level"/>
<gene>
    <name type="primary">eno-1</name>
</gene>
<organism>
    <name type="scientific">Tuber borchii</name>
    <name type="common">White truffle</name>
    <dbReference type="NCBI Taxonomy" id="42251"/>
    <lineage>
        <taxon>Eukaryota</taxon>
        <taxon>Fungi</taxon>
        <taxon>Dikarya</taxon>
        <taxon>Ascomycota</taxon>
        <taxon>Pezizomycotina</taxon>
        <taxon>Pezizomycetes</taxon>
        <taxon>Pezizales</taxon>
        <taxon>Tuberaceae</taxon>
        <taxon>Tuber</taxon>
    </lineage>
</organism>